<keyword id="KW-0998">Cell outer membrane</keyword>
<keyword id="KW-0472">Membrane</keyword>
<keyword id="KW-0677">Repeat</keyword>
<keyword id="KW-0732">Signal</keyword>
<keyword id="KW-0812">Transmembrane</keyword>
<keyword id="KW-1134">Transmembrane beta strand</keyword>
<protein>
    <recommendedName>
        <fullName evidence="1">Outer membrane protein assembly factor BamA</fullName>
    </recommendedName>
</protein>
<reference key="1">
    <citation type="journal article" date="2001" name="Nature">
        <title>Complete genome sequence of a multiple drug resistant Salmonella enterica serovar Typhi CT18.</title>
        <authorList>
            <person name="Parkhill J."/>
            <person name="Dougan G."/>
            <person name="James K.D."/>
            <person name="Thomson N.R."/>
            <person name="Pickard D."/>
            <person name="Wain J."/>
            <person name="Churcher C.M."/>
            <person name="Mungall K.L."/>
            <person name="Bentley S.D."/>
            <person name="Holden M.T.G."/>
            <person name="Sebaihia M."/>
            <person name="Baker S."/>
            <person name="Basham D."/>
            <person name="Brooks K."/>
            <person name="Chillingworth T."/>
            <person name="Connerton P."/>
            <person name="Cronin A."/>
            <person name="Davis P."/>
            <person name="Davies R.M."/>
            <person name="Dowd L."/>
            <person name="White N."/>
            <person name="Farrar J."/>
            <person name="Feltwell T."/>
            <person name="Hamlin N."/>
            <person name="Haque A."/>
            <person name="Hien T.T."/>
            <person name="Holroyd S."/>
            <person name="Jagels K."/>
            <person name="Krogh A."/>
            <person name="Larsen T.S."/>
            <person name="Leather S."/>
            <person name="Moule S."/>
            <person name="O'Gaora P."/>
            <person name="Parry C."/>
            <person name="Quail M.A."/>
            <person name="Rutherford K.M."/>
            <person name="Simmonds M."/>
            <person name="Skelton J."/>
            <person name="Stevens K."/>
            <person name="Whitehead S."/>
            <person name="Barrell B.G."/>
        </authorList>
    </citation>
    <scope>NUCLEOTIDE SEQUENCE [LARGE SCALE GENOMIC DNA]</scope>
    <source>
        <strain>CT18</strain>
    </source>
</reference>
<reference key="2">
    <citation type="journal article" date="2003" name="J. Bacteriol.">
        <title>Comparative genomics of Salmonella enterica serovar Typhi strains Ty2 and CT18.</title>
        <authorList>
            <person name="Deng W."/>
            <person name="Liou S.-R."/>
            <person name="Plunkett G. III"/>
            <person name="Mayhew G.F."/>
            <person name="Rose D.J."/>
            <person name="Burland V."/>
            <person name="Kodoyianni V."/>
            <person name="Schwartz D.C."/>
            <person name="Blattner F.R."/>
        </authorList>
    </citation>
    <scope>NUCLEOTIDE SEQUENCE [LARGE SCALE GENOMIC DNA]</scope>
    <source>
        <strain>ATCC 700931 / Ty2</strain>
    </source>
</reference>
<feature type="signal peptide" evidence="1">
    <location>
        <begin position="1"/>
        <end position="20"/>
    </location>
</feature>
<feature type="chain" id="PRO_0000045376" description="Outer membrane protein assembly factor BamA">
    <location>
        <begin position="21"/>
        <end position="803"/>
    </location>
</feature>
<feature type="domain" description="POTRA 1" evidence="2">
    <location>
        <begin position="24"/>
        <end position="91"/>
    </location>
</feature>
<feature type="domain" description="POTRA 2" evidence="2">
    <location>
        <begin position="92"/>
        <end position="172"/>
    </location>
</feature>
<feature type="domain" description="POTRA 3" evidence="2">
    <location>
        <begin position="175"/>
        <end position="263"/>
    </location>
</feature>
<feature type="domain" description="POTRA 4" evidence="2">
    <location>
        <begin position="266"/>
        <end position="344"/>
    </location>
</feature>
<feature type="domain" description="POTRA 5" evidence="2">
    <location>
        <begin position="347"/>
        <end position="421"/>
    </location>
</feature>
<accession>Q8Z9A3</accession>
<accession>Q7CBP9</accession>
<gene>
    <name evidence="1" type="primary">bamA</name>
    <name type="synonym">yaeT</name>
    <name type="ordered locus">STY0247</name>
    <name type="ordered locus">t0225</name>
</gene>
<evidence type="ECO:0000255" key="1">
    <source>
        <dbReference type="HAMAP-Rule" id="MF_01430"/>
    </source>
</evidence>
<evidence type="ECO:0000255" key="2">
    <source>
        <dbReference type="PROSITE-ProRule" id="PRU01115"/>
    </source>
</evidence>
<sequence length="803" mass="89467">MAMKKLLIASLLFSSATVYGAEGFVVKDIHFEGLQRVAVGAALLSMPVRTGDTVNDEDISNTIRALFATGNFEDVRVLRDGNTLLVQVKERPTIASITFSGNKSVKDDMLKQNLEASGVRVGESLDRTTLSDIEKGLEDFYYSVGKYSASVKAVVTPLPRNRVDLKLVFQEGVSAKIQQINIVGNHAFSTEELISHFQLRDEVPWWNVVGDRKYQKQKLAGDLETLRSYYLDRGYARFNIDSTQVSLTPDKKGIYITVNITEGDQYKLSGVQVSGNLAGHSAEIEKLTKIEPGELYNGTKVTKMEDDIKKLLGRYGYAYPRVQSQPEINDADKTVKLRVNVDAGNRFYVRKIRFEGNDTSKDSVLRREMRQMEGAWLGSDLVDQGKERLNRLGFFETVDTDTQRVPGSPDQVDVVYKVKERNTGSFNFGIGYGTESGVSFQAGVQQDNWLGTGYSVGINGTKNDYQTYSELSVTNPYFTVDGVSLGGRIFYNDFEADDADLSDYTNKSYGTDVTLGFPINEYNTLRAGLGYVHNKLSNMQPQIAMDRYLESMGDPDASDFAADDFTFNYGWTYNKLDRGYFPTDGSRVNLTGKVTIPGSDNEYYKVSLDTATYVPIDNDHKWVVLGRTRWGYGDGLGGKEMPFYENFYAGGSSTVRGFQSNTIGPKAVYKNGAHTSWDDDDDYEDCTQESGCKSDDAVGGNAMAVASLEFITPTPFISEKYANSVRTSFFWDMGTVWDTNWDPSSAPSDVPDYSDPGNIRMSAGIALQWMSPLGPLVFSYAQPFKKYDGDKAEQFQFNIGKTW</sequence>
<comment type="function">
    <text evidence="1">Part of the outer membrane protein assembly complex, which is involved in assembly and insertion of beta-barrel proteins into the outer membrane. Constitutes, with BamD, the core component of the assembly machinery.</text>
</comment>
<comment type="subunit">
    <text evidence="1">Part of the Bam complex, which is composed of the outer membrane protein BamA, and four lipoproteins BamB, BamC, BamD and BamE.</text>
</comment>
<comment type="subcellular location">
    <subcellularLocation>
        <location evidence="1">Cell outer membrane</location>
    </subcellularLocation>
</comment>
<comment type="similarity">
    <text evidence="1">Belongs to the BamA family.</text>
</comment>
<dbReference type="EMBL" id="AL513382">
    <property type="protein sequence ID" value="CAD08682.1"/>
    <property type="molecule type" value="Genomic_DNA"/>
</dbReference>
<dbReference type="EMBL" id="AE014613">
    <property type="protein sequence ID" value="AAO67955.1"/>
    <property type="molecule type" value="Genomic_DNA"/>
</dbReference>
<dbReference type="RefSeq" id="NP_454831.1">
    <property type="nucleotide sequence ID" value="NC_003198.1"/>
</dbReference>
<dbReference type="RefSeq" id="WP_001240921.1">
    <property type="nucleotide sequence ID" value="NZ_WSUR01000009.1"/>
</dbReference>
<dbReference type="SMR" id="Q8Z9A3"/>
<dbReference type="STRING" id="220341.gene:17584280"/>
<dbReference type="KEGG" id="stt:t0225"/>
<dbReference type="KEGG" id="sty:STY0247"/>
<dbReference type="PATRIC" id="fig|220341.7.peg.247"/>
<dbReference type="eggNOG" id="COG4775">
    <property type="taxonomic scope" value="Bacteria"/>
</dbReference>
<dbReference type="HOGENOM" id="CLU_007664_1_0_6"/>
<dbReference type="OMA" id="TNPRIFD"/>
<dbReference type="OrthoDB" id="9803054at2"/>
<dbReference type="Proteomes" id="UP000000541">
    <property type="component" value="Chromosome"/>
</dbReference>
<dbReference type="Proteomes" id="UP000002670">
    <property type="component" value="Chromosome"/>
</dbReference>
<dbReference type="GO" id="GO:1990063">
    <property type="term" value="C:Bam protein complex"/>
    <property type="evidence" value="ECO:0007669"/>
    <property type="project" value="TreeGrafter"/>
</dbReference>
<dbReference type="GO" id="GO:0043165">
    <property type="term" value="P:Gram-negative-bacterium-type cell outer membrane assembly"/>
    <property type="evidence" value="ECO:0007669"/>
    <property type="project" value="UniProtKB-UniRule"/>
</dbReference>
<dbReference type="GO" id="GO:0051205">
    <property type="term" value="P:protein insertion into membrane"/>
    <property type="evidence" value="ECO:0007669"/>
    <property type="project" value="UniProtKB-UniRule"/>
</dbReference>
<dbReference type="FunFam" id="2.40.160.50:FF:000001">
    <property type="entry name" value="Outer membrane protein assembly factor BamA"/>
    <property type="match status" value="1"/>
</dbReference>
<dbReference type="FunFam" id="3.10.20.310:FF:000001">
    <property type="entry name" value="Outer membrane protein assembly factor BamA"/>
    <property type="match status" value="1"/>
</dbReference>
<dbReference type="FunFam" id="3.10.20.310:FF:000002">
    <property type="entry name" value="Outer membrane protein assembly factor BamA"/>
    <property type="match status" value="1"/>
</dbReference>
<dbReference type="FunFam" id="3.10.20.310:FF:000003">
    <property type="entry name" value="Outer membrane protein assembly factor BamA"/>
    <property type="match status" value="1"/>
</dbReference>
<dbReference type="FunFam" id="3.10.20.310:FF:000004">
    <property type="entry name" value="Outer membrane protein assembly factor BamA"/>
    <property type="match status" value="1"/>
</dbReference>
<dbReference type="FunFam" id="3.10.20.310:FF:000005">
    <property type="entry name" value="Outer membrane protein assembly factor BamA"/>
    <property type="match status" value="1"/>
</dbReference>
<dbReference type="Gene3D" id="3.10.20.310">
    <property type="entry name" value="membrane protein fhac"/>
    <property type="match status" value="5"/>
</dbReference>
<dbReference type="Gene3D" id="2.40.160.50">
    <property type="entry name" value="membrane protein fhac: a member of the omp85/tpsb transporter family"/>
    <property type="match status" value="1"/>
</dbReference>
<dbReference type="HAMAP" id="MF_01430">
    <property type="entry name" value="OM_assembly_BamA"/>
    <property type="match status" value="1"/>
</dbReference>
<dbReference type="InterPro" id="IPR000184">
    <property type="entry name" value="Bac_surfAg_D15"/>
</dbReference>
<dbReference type="InterPro" id="IPR010827">
    <property type="entry name" value="BamA/TamA_POTRA"/>
</dbReference>
<dbReference type="InterPro" id="IPR039910">
    <property type="entry name" value="D15-like"/>
</dbReference>
<dbReference type="InterPro" id="IPR023707">
    <property type="entry name" value="OM_assembly_BamA"/>
</dbReference>
<dbReference type="InterPro" id="IPR034746">
    <property type="entry name" value="POTRA"/>
</dbReference>
<dbReference type="NCBIfam" id="TIGR03303">
    <property type="entry name" value="OM_YaeT"/>
    <property type="match status" value="1"/>
</dbReference>
<dbReference type="NCBIfam" id="NF008287">
    <property type="entry name" value="PRK11067.1"/>
    <property type="match status" value="1"/>
</dbReference>
<dbReference type="PANTHER" id="PTHR12815:SF23">
    <property type="entry name" value="OUTER MEMBRANE PROTEIN ASSEMBLY FACTOR BAMA"/>
    <property type="match status" value="1"/>
</dbReference>
<dbReference type="PANTHER" id="PTHR12815">
    <property type="entry name" value="SORTING AND ASSEMBLY MACHINERY SAMM50 PROTEIN FAMILY MEMBER"/>
    <property type="match status" value="1"/>
</dbReference>
<dbReference type="Pfam" id="PF01103">
    <property type="entry name" value="Omp85"/>
    <property type="match status" value="1"/>
</dbReference>
<dbReference type="Pfam" id="PF07244">
    <property type="entry name" value="POTRA"/>
    <property type="match status" value="4"/>
</dbReference>
<dbReference type="PIRSF" id="PIRSF006076">
    <property type="entry name" value="OM_assembly_OMP85"/>
    <property type="match status" value="1"/>
</dbReference>
<dbReference type="PROSITE" id="PS51779">
    <property type="entry name" value="POTRA"/>
    <property type="match status" value="5"/>
</dbReference>
<name>BAMA_SALTI</name>
<organism>
    <name type="scientific">Salmonella typhi</name>
    <dbReference type="NCBI Taxonomy" id="90370"/>
    <lineage>
        <taxon>Bacteria</taxon>
        <taxon>Pseudomonadati</taxon>
        <taxon>Pseudomonadota</taxon>
        <taxon>Gammaproteobacteria</taxon>
        <taxon>Enterobacterales</taxon>
        <taxon>Enterobacteriaceae</taxon>
        <taxon>Salmonella</taxon>
    </lineage>
</organism>
<proteinExistence type="inferred from homology"/>